<keyword id="KW-0884">PQQ biosynthesis</keyword>
<keyword id="KW-0813">Transport</keyword>
<sequence length="299" mass="32089">MHVVILGSAAGGGVPQWNCRCSICSLAWAGDSRVRPRTQSSIAVSPDGERWLLLNASPDIRQQIQANPQMHPREGLRHSPIHAVLLTNGDVDHVAGLLTLREGQPFTLYATPGILASVSDNRVFDVMAAEVVKRQTIALNETFEPVPGLSVTLFSVPGKVPLWLEDASMEIGAETETTVGTMIEAGGKRLAYIPGCARVTEDLKARIAGADALLFDGTVLEDDDMIRAGVGTKTGWRMGHIQMNGETGSIASLADVEIGRRVFVHINNTNPVLIEDSSERASVEARGWTVAHDGLTLDL</sequence>
<comment type="function">
    <text evidence="1">May be involved in the transport of PQQ or its precursor to the periplasm.</text>
</comment>
<comment type="pathway">
    <text evidence="1">Cofactor biosynthesis; pyrroloquinoline quinone biosynthesis.</text>
</comment>
<comment type="similarity">
    <text evidence="1">Belongs to the PqqB family.</text>
</comment>
<accession>A9W3R2</accession>
<protein>
    <recommendedName>
        <fullName evidence="1">Coenzyme PQQ synthesis protein B</fullName>
    </recommendedName>
    <alternativeName>
        <fullName evidence="1">Pyrroloquinoline quinone biosynthesis protein B</fullName>
    </alternativeName>
</protein>
<evidence type="ECO:0000255" key="1">
    <source>
        <dbReference type="HAMAP-Rule" id="MF_00653"/>
    </source>
</evidence>
<dbReference type="EMBL" id="CP000908">
    <property type="protein sequence ID" value="ABY30218.1"/>
    <property type="molecule type" value="Genomic_DNA"/>
</dbReference>
<dbReference type="RefSeq" id="WP_012253379.1">
    <property type="nucleotide sequence ID" value="NC_010172.1"/>
</dbReference>
<dbReference type="SMR" id="A9W3R2"/>
<dbReference type="GeneID" id="72989476"/>
<dbReference type="KEGG" id="mex:Mext_1819"/>
<dbReference type="eggNOG" id="COG1235">
    <property type="taxonomic scope" value="Bacteria"/>
</dbReference>
<dbReference type="HOGENOM" id="CLU_061120_0_0_5"/>
<dbReference type="BioCyc" id="MEXT419610:MEXT_RS09215-MONOMER"/>
<dbReference type="UniPathway" id="UPA00539"/>
<dbReference type="GO" id="GO:0018189">
    <property type="term" value="P:pyrroloquinoline quinone biosynthetic process"/>
    <property type="evidence" value="ECO:0007669"/>
    <property type="project" value="UniProtKB-UniRule"/>
</dbReference>
<dbReference type="CDD" id="cd16274">
    <property type="entry name" value="PQQB-like_MBL-fold"/>
    <property type="match status" value="1"/>
</dbReference>
<dbReference type="Gene3D" id="3.60.15.10">
    <property type="entry name" value="Ribonuclease Z/Hydroxyacylglutathione hydrolase-like"/>
    <property type="match status" value="1"/>
</dbReference>
<dbReference type="HAMAP" id="MF_00653">
    <property type="entry name" value="PQQ_syn_PqqB"/>
    <property type="match status" value="1"/>
</dbReference>
<dbReference type="InterPro" id="IPR001279">
    <property type="entry name" value="Metallo-B-lactamas"/>
</dbReference>
<dbReference type="InterPro" id="IPR011842">
    <property type="entry name" value="PQQ_synth_PqqB"/>
</dbReference>
<dbReference type="InterPro" id="IPR036866">
    <property type="entry name" value="RibonucZ/Hydroxyglut_hydro"/>
</dbReference>
<dbReference type="NCBIfam" id="TIGR02108">
    <property type="entry name" value="PQQ_syn_pqqB"/>
    <property type="match status" value="1"/>
</dbReference>
<dbReference type="PANTHER" id="PTHR42663:SF7">
    <property type="entry name" value="COENZYME PQQ SYNTHESIS PROTEIN B"/>
    <property type="match status" value="1"/>
</dbReference>
<dbReference type="PANTHER" id="PTHR42663">
    <property type="entry name" value="HYDROLASE C777.06C-RELATED-RELATED"/>
    <property type="match status" value="1"/>
</dbReference>
<dbReference type="Pfam" id="PF12706">
    <property type="entry name" value="Lactamase_B_2"/>
    <property type="match status" value="1"/>
</dbReference>
<dbReference type="SUPFAM" id="SSF56281">
    <property type="entry name" value="Metallo-hydrolase/oxidoreductase"/>
    <property type="match status" value="1"/>
</dbReference>
<name>PQQB_METEP</name>
<proteinExistence type="inferred from homology"/>
<gene>
    <name evidence="1" type="primary">pqqB</name>
    <name type="ordered locus">Mext_1819</name>
</gene>
<organism>
    <name type="scientific">Methylorubrum extorquens (strain PA1)</name>
    <name type="common">Methylobacterium extorquens</name>
    <dbReference type="NCBI Taxonomy" id="419610"/>
    <lineage>
        <taxon>Bacteria</taxon>
        <taxon>Pseudomonadati</taxon>
        <taxon>Pseudomonadota</taxon>
        <taxon>Alphaproteobacteria</taxon>
        <taxon>Hyphomicrobiales</taxon>
        <taxon>Methylobacteriaceae</taxon>
        <taxon>Methylorubrum</taxon>
    </lineage>
</organism>
<reference key="1">
    <citation type="submission" date="2007-12" db="EMBL/GenBank/DDBJ databases">
        <title>Complete sequence of Methylobacterium extorquens PA1.</title>
        <authorList>
            <consortium name="US DOE Joint Genome Institute"/>
            <person name="Copeland A."/>
            <person name="Lucas S."/>
            <person name="Lapidus A."/>
            <person name="Barry K."/>
            <person name="Glavina del Rio T."/>
            <person name="Dalin E."/>
            <person name="Tice H."/>
            <person name="Pitluck S."/>
            <person name="Saunders E."/>
            <person name="Brettin T."/>
            <person name="Bruce D."/>
            <person name="Detter J.C."/>
            <person name="Han C."/>
            <person name="Schmutz J."/>
            <person name="Larimer F."/>
            <person name="Land M."/>
            <person name="Hauser L."/>
            <person name="Kyrpides N."/>
            <person name="Kim E."/>
            <person name="Marx C."/>
            <person name="Richardson P."/>
        </authorList>
    </citation>
    <scope>NUCLEOTIDE SEQUENCE [LARGE SCALE GENOMIC DNA]</scope>
    <source>
        <strain>PA1</strain>
    </source>
</reference>
<feature type="chain" id="PRO_1000131163" description="Coenzyme PQQ synthesis protein B">
    <location>
        <begin position="1"/>
        <end position="299"/>
    </location>
</feature>